<name>GLMM_SULNB</name>
<accession>A6Q6B6</accession>
<comment type="function">
    <text evidence="1">Catalyzes the conversion of glucosamine-6-phosphate to glucosamine-1-phosphate.</text>
</comment>
<comment type="catalytic activity">
    <reaction evidence="1">
        <text>alpha-D-glucosamine 1-phosphate = D-glucosamine 6-phosphate</text>
        <dbReference type="Rhea" id="RHEA:23424"/>
        <dbReference type="ChEBI" id="CHEBI:58516"/>
        <dbReference type="ChEBI" id="CHEBI:58725"/>
        <dbReference type="EC" id="5.4.2.10"/>
    </reaction>
</comment>
<comment type="cofactor">
    <cofactor evidence="1">
        <name>Mg(2+)</name>
        <dbReference type="ChEBI" id="CHEBI:18420"/>
    </cofactor>
    <text evidence="1">Binds 1 Mg(2+) ion per subunit.</text>
</comment>
<comment type="PTM">
    <text evidence="1">Activated by phosphorylation.</text>
</comment>
<comment type="similarity">
    <text evidence="1">Belongs to the phosphohexose mutase family.</text>
</comment>
<sequence>MTLFGTDGVRGKAGKKVSAVNTMRLAMATGIYFKQFAKTNKILVGKDTRRSGYMIENALVSGLTAVGFDVIQIGPMPTPAIAFLTENMRCDAGIMISASHNPYYDNGIKFFDSEGNKLNRSEEEKIEEIFADDDALEDAQVTGKYIGKSKRIDDVIGRYIVHIKNSFPKSLSLAGKRVVIDCANGAGYIVGPTVLQELGAEVVVVGDEPDGFNINEGCGAMHPENLAKVVLDKRADIGLALDGDADRLVVVDEKGETVDGDKLMAVLAVHLKNTGELRGDGMVATVMSNQGLEEYLLEHGITVYRSAVGDKNVVEMMQEKGVNFGGEQSGHIIFSDYAKTGDGISSALQALAYLVSTGTKTSEAFNPYESYPQMLVNLPIEEKKPLESIEGLEQLMEQVEAEGMRHLFRYSGTENKIRLLLEGKNEKALETMMDECMDFFKRTLV</sequence>
<keyword id="KW-0413">Isomerase</keyword>
<keyword id="KW-0460">Magnesium</keyword>
<keyword id="KW-0479">Metal-binding</keyword>
<keyword id="KW-0597">Phosphoprotein</keyword>
<reference key="1">
    <citation type="journal article" date="2007" name="Proc. Natl. Acad. Sci. U.S.A.">
        <title>Deep-sea vent epsilon-proteobacterial genomes provide insights into emergence of pathogens.</title>
        <authorList>
            <person name="Nakagawa S."/>
            <person name="Takaki Y."/>
            <person name="Shimamura S."/>
            <person name="Reysenbach A.-L."/>
            <person name="Takai K."/>
            <person name="Horikoshi K."/>
        </authorList>
    </citation>
    <scope>NUCLEOTIDE SEQUENCE [LARGE SCALE GENOMIC DNA]</scope>
    <source>
        <strain>NBC37-1</strain>
    </source>
</reference>
<feature type="chain" id="PRO_0000305683" description="Phosphoglucosamine mutase">
    <location>
        <begin position="1"/>
        <end position="445"/>
    </location>
</feature>
<feature type="active site" description="Phosphoserine intermediate" evidence="1">
    <location>
        <position position="99"/>
    </location>
</feature>
<feature type="binding site" description="via phosphate group" evidence="1">
    <location>
        <position position="99"/>
    </location>
    <ligand>
        <name>Mg(2+)</name>
        <dbReference type="ChEBI" id="CHEBI:18420"/>
    </ligand>
</feature>
<feature type="binding site" evidence="1">
    <location>
        <position position="242"/>
    </location>
    <ligand>
        <name>Mg(2+)</name>
        <dbReference type="ChEBI" id="CHEBI:18420"/>
    </ligand>
</feature>
<feature type="binding site" evidence="1">
    <location>
        <position position="244"/>
    </location>
    <ligand>
        <name>Mg(2+)</name>
        <dbReference type="ChEBI" id="CHEBI:18420"/>
    </ligand>
</feature>
<feature type="binding site" evidence="1">
    <location>
        <position position="246"/>
    </location>
    <ligand>
        <name>Mg(2+)</name>
        <dbReference type="ChEBI" id="CHEBI:18420"/>
    </ligand>
</feature>
<feature type="modified residue" description="Phosphoserine" evidence="1">
    <location>
        <position position="99"/>
    </location>
</feature>
<evidence type="ECO:0000255" key="1">
    <source>
        <dbReference type="HAMAP-Rule" id="MF_01554"/>
    </source>
</evidence>
<protein>
    <recommendedName>
        <fullName evidence="1">Phosphoglucosamine mutase</fullName>
        <ecNumber evidence="1">5.4.2.10</ecNumber>
    </recommendedName>
</protein>
<organism>
    <name type="scientific">Sulfurovum sp. (strain NBC37-1)</name>
    <dbReference type="NCBI Taxonomy" id="387093"/>
    <lineage>
        <taxon>Bacteria</taxon>
        <taxon>Pseudomonadati</taxon>
        <taxon>Campylobacterota</taxon>
        <taxon>Epsilonproteobacteria</taxon>
        <taxon>Campylobacterales</taxon>
        <taxon>Sulfurovaceae</taxon>
        <taxon>Sulfurovum</taxon>
    </lineage>
</organism>
<gene>
    <name evidence="1" type="primary">glmM</name>
    <name type="ordered locus">SUN_0065</name>
</gene>
<proteinExistence type="inferred from homology"/>
<dbReference type="EC" id="5.4.2.10" evidence="1"/>
<dbReference type="EMBL" id="AP009179">
    <property type="protein sequence ID" value="BAF71025.1"/>
    <property type="molecule type" value="Genomic_DNA"/>
</dbReference>
<dbReference type="RefSeq" id="WP_011979758.1">
    <property type="nucleotide sequence ID" value="NC_009663.1"/>
</dbReference>
<dbReference type="SMR" id="A6Q6B6"/>
<dbReference type="STRING" id="387093.SUN_0065"/>
<dbReference type="KEGG" id="sun:SUN_0065"/>
<dbReference type="eggNOG" id="COG1109">
    <property type="taxonomic scope" value="Bacteria"/>
</dbReference>
<dbReference type="HOGENOM" id="CLU_016950_7_0_7"/>
<dbReference type="OrthoDB" id="9806956at2"/>
<dbReference type="Proteomes" id="UP000006378">
    <property type="component" value="Chromosome"/>
</dbReference>
<dbReference type="GO" id="GO:0005829">
    <property type="term" value="C:cytosol"/>
    <property type="evidence" value="ECO:0007669"/>
    <property type="project" value="TreeGrafter"/>
</dbReference>
<dbReference type="GO" id="GO:0000287">
    <property type="term" value="F:magnesium ion binding"/>
    <property type="evidence" value="ECO:0007669"/>
    <property type="project" value="UniProtKB-UniRule"/>
</dbReference>
<dbReference type="GO" id="GO:0008966">
    <property type="term" value="F:phosphoglucosamine mutase activity"/>
    <property type="evidence" value="ECO:0007669"/>
    <property type="project" value="UniProtKB-UniRule"/>
</dbReference>
<dbReference type="GO" id="GO:0004615">
    <property type="term" value="F:phosphomannomutase activity"/>
    <property type="evidence" value="ECO:0007669"/>
    <property type="project" value="TreeGrafter"/>
</dbReference>
<dbReference type="GO" id="GO:0005975">
    <property type="term" value="P:carbohydrate metabolic process"/>
    <property type="evidence" value="ECO:0007669"/>
    <property type="project" value="InterPro"/>
</dbReference>
<dbReference type="GO" id="GO:0009252">
    <property type="term" value="P:peptidoglycan biosynthetic process"/>
    <property type="evidence" value="ECO:0007669"/>
    <property type="project" value="TreeGrafter"/>
</dbReference>
<dbReference type="GO" id="GO:0006048">
    <property type="term" value="P:UDP-N-acetylglucosamine biosynthetic process"/>
    <property type="evidence" value="ECO:0007669"/>
    <property type="project" value="TreeGrafter"/>
</dbReference>
<dbReference type="CDD" id="cd05802">
    <property type="entry name" value="GlmM"/>
    <property type="match status" value="1"/>
</dbReference>
<dbReference type="FunFam" id="3.40.120.10:FF:000001">
    <property type="entry name" value="Phosphoglucosamine mutase"/>
    <property type="match status" value="1"/>
</dbReference>
<dbReference type="FunFam" id="3.40.120.10:FF:000003">
    <property type="entry name" value="Phosphoglucosamine mutase"/>
    <property type="match status" value="1"/>
</dbReference>
<dbReference type="Gene3D" id="3.40.120.10">
    <property type="entry name" value="Alpha-D-Glucose-1,6-Bisphosphate, subunit A, domain 3"/>
    <property type="match status" value="3"/>
</dbReference>
<dbReference type="Gene3D" id="3.30.310.50">
    <property type="entry name" value="Alpha-D-phosphohexomutase, C-terminal domain"/>
    <property type="match status" value="1"/>
</dbReference>
<dbReference type="HAMAP" id="MF_01554_B">
    <property type="entry name" value="GlmM_B"/>
    <property type="match status" value="1"/>
</dbReference>
<dbReference type="InterPro" id="IPR005844">
    <property type="entry name" value="A-D-PHexomutase_a/b/a-I"/>
</dbReference>
<dbReference type="InterPro" id="IPR016055">
    <property type="entry name" value="A-D-PHexomutase_a/b/a-I/II/III"/>
</dbReference>
<dbReference type="InterPro" id="IPR005845">
    <property type="entry name" value="A-D-PHexomutase_a/b/a-II"/>
</dbReference>
<dbReference type="InterPro" id="IPR005846">
    <property type="entry name" value="A-D-PHexomutase_a/b/a-III"/>
</dbReference>
<dbReference type="InterPro" id="IPR005843">
    <property type="entry name" value="A-D-PHexomutase_C"/>
</dbReference>
<dbReference type="InterPro" id="IPR036900">
    <property type="entry name" value="A-D-PHexomutase_C_sf"/>
</dbReference>
<dbReference type="InterPro" id="IPR016066">
    <property type="entry name" value="A-D-PHexomutase_CS"/>
</dbReference>
<dbReference type="InterPro" id="IPR005841">
    <property type="entry name" value="Alpha-D-phosphohexomutase_SF"/>
</dbReference>
<dbReference type="InterPro" id="IPR006352">
    <property type="entry name" value="GlmM_bact"/>
</dbReference>
<dbReference type="InterPro" id="IPR050060">
    <property type="entry name" value="Phosphoglucosamine_mutase"/>
</dbReference>
<dbReference type="NCBIfam" id="TIGR01455">
    <property type="entry name" value="glmM"/>
    <property type="match status" value="1"/>
</dbReference>
<dbReference type="NCBIfam" id="NF008139">
    <property type="entry name" value="PRK10887.1"/>
    <property type="match status" value="1"/>
</dbReference>
<dbReference type="PANTHER" id="PTHR42946:SF1">
    <property type="entry name" value="PHOSPHOGLUCOMUTASE (ALPHA-D-GLUCOSE-1,6-BISPHOSPHATE-DEPENDENT)"/>
    <property type="match status" value="1"/>
</dbReference>
<dbReference type="PANTHER" id="PTHR42946">
    <property type="entry name" value="PHOSPHOHEXOSE MUTASE"/>
    <property type="match status" value="1"/>
</dbReference>
<dbReference type="Pfam" id="PF02878">
    <property type="entry name" value="PGM_PMM_I"/>
    <property type="match status" value="1"/>
</dbReference>
<dbReference type="Pfam" id="PF02879">
    <property type="entry name" value="PGM_PMM_II"/>
    <property type="match status" value="1"/>
</dbReference>
<dbReference type="Pfam" id="PF02880">
    <property type="entry name" value="PGM_PMM_III"/>
    <property type="match status" value="1"/>
</dbReference>
<dbReference type="Pfam" id="PF00408">
    <property type="entry name" value="PGM_PMM_IV"/>
    <property type="match status" value="1"/>
</dbReference>
<dbReference type="PRINTS" id="PR00509">
    <property type="entry name" value="PGMPMM"/>
</dbReference>
<dbReference type="SUPFAM" id="SSF55957">
    <property type="entry name" value="Phosphoglucomutase, C-terminal domain"/>
    <property type="match status" value="1"/>
</dbReference>
<dbReference type="SUPFAM" id="SSF53738">
    <property type="entry name" value="Phosphoglucomutase, first 3 domains"/>
    <property type="match status" value="3"/>
</dbReference>
<dbReference type="PROSITE" id="PS00710">
    <property type="entry name" value="PGM_PMM"/>
    <property type="match status" value="1"/>
</dbReference>